<protein>
    <recommendedName>
        <fullName evidence="1">Putative multidrug resistance protein MdtD</fullName>
    </recommendedName>
</protein>
<proteinExistence type="inferred from homology"/>
<sequence length="471" mass="50866">MTDLPDSTRWQLWIVAFGFFMQSLDTTIVNTALPSMAQSLGESPLHMHMVIVSYVLTVAVMLPASGWLADKVGVRNIFFTAIVLFTLGSLFCALSGTLNELLLARALQGVGGAMMVPVGRLTVMKIVPREQYMAAMTFVTLPGQVGPLLGPALGGLLVEYASWHWIFLINIPVGIIGAIATLMLMPNYTMQTRRFDLSGFLLLAVGMAVLTLALDGSKGTGLSPLTIAGLVAVGVVALVLYLLHARNNNRALFSLKLFRTRTFSLGLAGSFAGRIGSGMLPFMTPVFLQIGLGFSPFHAGLMMIPMVLGSMGMKRIVVQVVNCFGYRRVLVATTLGLSLVTLLFMTTALLGWYYVLPFVLFLQGMVNSTRFSSMNTLTLKDLPDNLASSGNSLLSMIMQLSMSIGVTIAGLLLGLFGSQHVSVDSGTTQTVFMYTWLSMALIIALPAFIFARVPNDTHQNVAISRRKRSAQ</sequence>
<comment type="subcellular location">
    <subcellularLocation>
        <location evidence="1">Cell inner membrane</location>
        <topology evidence="1">Multi-pass membrane protein</topology>
    </subcellularLocation>
</comment>
<comment type="similarity">
    <text evidence="1">Belongs to the major facilitator superfamily. TCR/Tet family.</text>
</comment>
<name>MDTD_ECO24</name>
<accession>A7ZNQ0</accession>
<gene>
    <name evidence="1" type="primary">mdtD</name>
    <name type="ordered locus">EcE24377A_2369</name>
</gene>
<dbReference type="EMBL" id="CP000800">
    <property type="protein sequence ID" value="ABV19139.1"/>
    <property type="molecule type" value="Genomic_DNA"/>
</dbReference>
<dbReference type="RefSeq" id="WP_000130894.1">
    <property type="nucleotide sequence ID" value="NC_009801.1"/>
</dbReference>
<dbReference type="SMR" id="A7ZNQ0"/>
<dbReference type="KEGG" id="ecw:EcE24377A_2369"/>
<dbReference type="HOGENOM" id="CLU_000960_28_0_6"/>
<dbReference type="Proteomes" id="UP000001122">
    <property type="component" value="Chromosome"/>
</dbReference>
<dbReference type="GO" id="GO:0005886">
    <property type="term" value="C:plasma membrane"/>
    <property type="evidence" value="ECO:0007669"/>
    <property type="project" value="UniProtKB-SubCell"/>
</dbReference>
<dbReference type="GO" id="GO:0022857">
    <property type="term" value="F:transmembrane transporter activity"/>
    <property type="evidence" value="ECO:0007669"/>
    <property type="project" value="UniProtKB-UniRule"/>
</dbReference>
<dbReference type="CDD" id="cd17503">
    <property type="entry name" value="MFS_LmrB_MDR_like"/>
    <property type="match status" value="1"/>
</dbReference>
<dbReference type="FunFam" id="1.20.1250.20:FF:000021">
    <property type="entry name" value="Putative multidrug resistance protein MdtD"/>
    <property type="match status" value="1"/>
</dbReference>
<dbReference type="FunFam" id="1.20.1720.10:FF:000001">
    <property type="entry name" value="Putative multidrug resistance protein MdtD"/>
    <property type="match status" value="1"/>
</dbReference>
<dbReference type="Gene3D" id="1.20.1250.20">
    <property type="entry name" value="MFS general substrate transporter like domains"/>
    <property type="match status" value="1"/>
</dbReference>
<dbReference type="Gene3D" id="1.20.1720.10">
    <property type="entry name" value="Multidrug resistance protein D"/>
    <property type="match status" value="1"/>
</dbReference>
<dbReference type="HAMAP" id="MF_01577">
    <property type="entry name" value="MFS_MdtD"/>
    <property type="match status" value="1"/>
</dbReference>
<dbReference type="InterPro" id="IPR004638">
    <property type="entry name" value="EmrB-like"/>
</dbReference>
<dbReference type="InterPro" id="IPR011701">
    <property type="entry name" value="MFS"/>
</dbReference>
<dbReference type="InterPro" id="IPR020846">
    <property type="entry name" value="MFS_dom"/>
</dbReference>
<dbReference type="InterPro" id="IPR036259">
    <property type="entry name" value="MFS_trans_sf"/>
</dbReference>
<dbReference type="InterPro" id="IPR023721">
    <property type="entry name" value="Multi-R_MdtD"/>
</dbReference>
<dbReference type="NCBIfam" id="TIGR00711">
    <property type="entry name" value="efflux_EmrB"/>
    <property type="match status" value="1"/>
</dbReference>
<dbReference type="NCBIfam" id="NF007799">
    <property type="entry name" value="PRK10504.1"/>
    <property type="match status" value="1"/>
</dbReference>
<dbReference type="PANTHER" id="PTHR42718:SF46">
    <property type="entry name" value="BLR6921 PROTEIN"/>
    <property type="match status" value="1"/>
</dbReference>
<dbReference type="PANTHER" id="PTHR42718">
    <property type="entry name" value="MAJOR FACILITATOR SUPERFAMILY MULTIDRUG TRANSPORTER MFSC"/>
    <property type="match status" value="1"/>
</dbReference>
<dbReference type="Pfam" id="PF07690">
    <property type="entry name" value="MFS_1"/>
    <property type="match status" value="1"/>
</dbReference>
<dbReference type="PRINTS" id="PR01036">
    <property type="entry name" value="TCRTETB"/>
</dbReference>
<dbReference type="SUPFAM" id="SSF103473">
    <property type="entry name" value="MFS general substrate transporter"/>
    <property type="match status" value="1"/>
</dbReference>
<dbReference type="PROSITE" id="PS50850">
    <property type="entry name" value="MFS"/>
    <property type="match status" value="1"/>
</dbReference>
<reference key="1">
    <citation type="journal article" date="2008" name="J. Bacteriol.">
        <title>The pangenome structure of Escherichia coli: comparative genomic analysis of E. coli commensal and pathogenic isolates.</title>
        <authorList>
            <person name="Rasko D.A."/>
            <person name="Rosovitz M.J."/>
            <person name="Myers G.S.A."/>
            <person name="Mongodin E.F."/>
            <person name="Fricke W.F."/>
            <person name="Gajer P."/>
            <person name="Crabtree J."/>
            <person name="Sebaihia M."/>
            <person name="Thomson N.R."/>
            <person name="Chaudhuri R."/>
            <person name="Henderson I.R."/>
            <person name="Sperandio V."/>
            <person name="Ravel J."/>
        </authorList>
    </citation>
    <scope>NUCLEOTIDE SEQUENCE [LARGE SCALE GENOMIC DNA]</scope>
    <source>
        <strain>E24377A / ETEC</strain>
    </source>
</reference>
<keyword id="KW-0997">Cell inner membrane</keyword>
<keyword id="KW-1003">Cell membrane</keyword>
<keyword id="KW-0472">Membrane</keyword>
<keyword id="KW-1185">Reference proteome</keyword>
<keyword id="KW-0812">Transmembrane</keyword>
<keyword id="KW-1133">Transmembrane helix</keyword>
<keyword id="KW-0813">Transport</keyword>
<organism>
    <name type="scientific">Escherichia coli O139:H28 (strain E24377A / ETEC)</name>
    <dbReference type="NCBI Taxonomy" id="331111"/>
    <lineage>
        <taxon>Bacteria</taxon>
        <taxon>Pseudomonadati</taxon>
        <taxon>Pseudomonadota</taxon>
        <taxon>Gammaproteobacteria</taxon>
        <taxon>Enterobacterales</taxon>
        <taxon>Enterobacteriaceae</taxon>
        <taxon>Escherichia</taxon>
    </lineage>
</organism>
<evidence type="ECO:0000255" key="1">
    <source>
        <dbReference type="HAMAP-Rule" id="MF_01577"/>
    </source>
</evidence>
<feature type="chain" id="PRO_1000069262" description="Putative multidrug resistance protein MdtD">
    <location>
        <begin position="1"/>
        <end position="471"/>
    </location>
</feature>
<feature type="topological domain" description="Periplasmic" evidence="1">
    <location>
        <begin position="1"/>
        <end position="11"/>
    </location>
</feature>
<feature type="transmembrane region" description="Helical" evidence="1">
    <location>
        <begin position="12"/>
        <end position="32"/>
    </location>
</feature>
<feature type="topological domain" description="Cytoplasmic" evidence="1">
    <location>
        <begin position="33"/>
        <end position="48"/>
    </location>
</feature>
<feature type="transmembrane region" description="Helical" evidence="1">
    <location>
        <begin position="49"/>
        <end position="69"/>
    </location>
</feature>
<feature type="topological domain" description="Periplasmic" evidence="1">
    <location>
        <begin position="70"/>
        <end position="76"/>
    </location>
</feature>
<feature type="transmembrane region" description="Helical" evidence="1">
    <location>
        <begin position="77"/>
        <end position="97"/>
    </location>
</feature>
<feature type="topological domain" description="Cytoplasmic" evidence="1">
    <location>
        <begin position="98"/>
        <end position="101"/>
    </location>
</feature>
<feature type="transmembrane region" description="Helical" evidence="1">
    <location>
        <begin position="102"/>
        <end position="124"/>
    </location>
</feature>
<feature type="topological domain" description="Periplasmic" evidence="1">
    <location>
        <begin position="125"/>
        <end position="137"/>
    </location>
</feature>
<feature type="transmembrane region" description="Helical" evidence="1">
    <location>
        <begin position="138"/>
        <end position="158"/>
    </location>
</feature>
<feature type="topological domain" description="Cytoplasmic" evidence="1">
    <location>
        <begin position="159"/>
        <end position="164"/>
    </location>
</feature>
<feature type="transmembrane region" description="Helical" evidence="1">
    <location>
        <begin position="165"/>
        <end position="185"/>
    </location>
</feature>
<feature type="topological domain" description="Periplasmic" evidence="1">
    <location>
        <begin position="186"/>
        <end position="196"/>
    </location>
</feature>
<feature type="transmembrane region" description="Helical" evidence="1">
    <location>
        <begin position="197"/>
        <end position="217"/>
    </location>
</feature>
<feature type="topological domain" description="Cytoplasmic" evidence="1">
    <location>
        <begin position="218"/>
        <end position="224"/>
    </location>
</feature>
<feature type="transmembrane region" description="Helical" evidence="1">
    <location>
        <begin position="225"/>
        <end position="245"/>
    </location>
</feature>
<feature type="topological domain" description="Periplasmic" evidence="1">
    <location>
        <begin position="246"/>
        <end position="262"/>
    </location>
</feature>
<feature type="transmembrane region" description="Helical" evidence="1">
    <location>
        <begin position="263"/>
        <end position="283"/>
    </location>
</feature>
<feature type="topological domain" description="Cytoplasmic" evidence="1">
    <location>
        <begin position="284"/>
        <end position="285"/>
    </location>
</feature>
<feature type="transmembrane region" description="Helical" evidence="1">
    <location>
        <begin position="286"/>
        <end position="306"/>
    </location>
</feature>
<feature type="topological domain" description="Periplasmic" evidence="1">
    <location>
        <begin position="307"/>
        <end position="341"/>
    </location>
</feature>
<feature type="transmembrane region" description="Helical" evidence="1">
    <location>
        <begin position="342"/>
        <end position="362"/>
    </location>
</feature>
<feature type="topological domain" description="Cytoplasmic" evidence="1">
    <location>
        <begin position="363"/>
        <end position="395"/>
    </location>
</feature>
<feature type="transmembrane region" description="Helical" evidence="1">
    <location>
        <begin position="396"/>
        <end position="416"/>
    </location>
</feature>
<feature type="topological domain" description="Periplasmic" evidence="1">
    <location>
        <begin position="417"/>
        <end position="430"/>
    </location>
</feature>
<feature type="transmembrane region" description="Helical" evidence="1">
    <location>
        <begin position="431"/>
        <end position="451"/>
    </location>
</feature>
<feature type="topological domain" description="Cytoplasmic" evidence="1">
    <location>
        <begin position="452"/>
        <end position="471"/>
    </location>
</feature>